<proteinExistence type="evidence at transcript level"/>
<feature type="chain" id="PRO_0000291883" description="Activated RNA polymerase II transcriptional coactivator p15">
    <location>
        <begin position="1"/>
        <end position="127"/>
    </location>
</feature>
<feature type="region of interest" description="Disordered" evidence="4">
    <location>
        <begin position="1"/>
        <end position="64"/>
    </location>
</feature>
<feature type="region of interest" description="Regulatory" evidence="1">
    <location>
        <begin position="1"/>
        <end position="50"/>
    </location>
</feature>
<feature type="region of interest" description="Interaction with ssDNA" evidence="1">
    <location>
        <begin position="77"/>
        <end position="101"/>
    </location>
</feature>
<feature type="compositionally biased region" description="Low complexity" evidence="4">
    <location>
        <begin position="7"/>
        <end position="16"/>
    </location>
</feature>
<feature type="compositionally biased region" description="Basic and acidic residues" evidence="4">
    <location>
        <begin position="31"/>
        <end position="44"/>
    </location>
</feature>
<feature type="compositionally biased region" description="Low complexity" evidence="4">
    <location>
        <begin position="46"/>
        <end position="57"/>
    </location>
</feature>
<feature type="site" description="Cleavage" evidence="1">
    <location>
        <begin position="50"/>
        <end position="51"/>
    </location>
</feature>
<feature type="modified residue" description="Phosphoserine" evidence="3">
    <location>
        <position position="4"/>
    </location>
</feature>
<feature type="modified residue" description="Phosphoserine" evidence="3">
    <location>
        <position position="9"/>
    </location>
</feature>
<feature type="modified residue" description="Phosphoserine" evidence="3">
    <location>
        <position position="10"/>
    </location>
</feature>
<feature type="modified residue" description="Phosphoserine" evidence="3">
    <location>
        <position position="11"/>
    </location>
</feature>
<feature type="modified residue" description="Phosphoserine" evidence="3">
    <location>
        <position position="13"/>
    </location>
</feature>
<feature type="modified residue" description="Phosphoserine" evidence="3">
    <location>
        <position position="15"/>
    </location>
</feature>
<feature type="modified residue" description="Phosphoserine" evidence="3">
    <location>
        <position position="17"/>
    </location>
</feature>
<feature type="modified residue" description="Phosphoserine" evidence="3">
    <location>
        <position position="19"/>
    </location>
</feature>
<feature type="modified residue" description="N6-acetyllysine" evidence="3">
    <location>
        <position position="35"/>
    </location>
</feature>
<feature type="modified residue" description="N6-acetyllysine" evidence="2">
    <location>
        <position position="53"/>
    </location>
</feature>
<feature type="modified residue" description="Phosphoserine" evidence="3">
    <location>
        <position position="55"/>
    </location>
</feature>
<feature type="modified residue" description="Phosphoserine" evidence="3">
    <location>
        <position position="56"/>
    </location>
</feature>
<feature type="modified residue" description="Phosphoserine" evidence="3">
    <location>
        <position position="57"/>
    </location>
</feature>
<feature type="modified residue" description="Phosphoserine" evidence="3">
    <location>
        <position position="58"/>
    </location>
</feature>
<feature type="modified residue" description="N6-acetyllysine; alternate" evidence="3">
    <location>
        <position position="68"/>
    </location>
</feature>
<feature type="modified residue" description="Phosphoserine" evidence="3">
    <location>
        <position position="118"/>
    </location>
</feature>
<feature type="cross-link" description="Glycyl lysine isopeptide (Lys-Gly) (interchain with G-Cter in SUMO1); alternate" evidence="3">
    <location>
        <position position="68"/>
    </location>
</feature>
<feature type="cross-link" description="Glycyl lysine isopeptide (Lys-Gly) (interchain with G-Cter in SUMO2); alternate" evidence="3">
    <location>
        <position position="68"/>
    </location>
</feature>
<reference key="1">
    <citation type="submission" date="2005-06" db="EMBL/GenBank/DDBJ databases">
        <title>DNA sequences of macaque genes expressed in brain or testis and its evolutionary implications.</title>
        <authorList>
            <consortium name="International consortium for macaque cDNA sequencing and analysis"/>
        </authorList>
    </citation>
    <scope>NUCLEOTIDE SEQUENCE [LARGE SCALE MRNA]</scope>
    <source>
        <tissue>Testis</tissue>
    </source>
</reference>
<sequence>MPKSKELVSSSSSGSDSDSEVDKKLKRKKQVAPEKPVKKQKTGETSRALSSSKQSSSSRDDNMFQIGKMRYVSVRDFKGKVLIDIREYWMDPEGEMKPGRKGISLNPEQWSQLKEQISDIDDAVRKL</sequence>
<gene>
    <name type="primary">SUB1</name>
    <name type="synonym">RPO2TC1</name>
    <name type="ORF">QtsA-10726</name>
</gene>
<accession>Q4R947</accession>
<comment type="function">
    <text evidence="1">General coactivator that functions cooperatively with TAFs and mediates functional interactions between upstream activators and the general transcriptional machinery. May be involved in stabilizing the multiprotein transcription complex. Binds single-stranded DNA. Also binds, in vitro, non-specifically to double-stranded DNA (ds DNA) (By similarity).</text>
</comment>
<comment type="subunit">
    <text evidence="1">Homodimer. Interacts with CSTF2 (By similarity).</text>
</comment>
<comment type="subcellular location">
    <subcellularLocation>
        <location evidence="1">Nucleus</location>
    </subcellularLocation>
</comment>
<comment type="PTM">
    <text evidence="1">Activity is controlled by protein kinases that target the regulatory region. Phosphorylation inactivates both ds DNA-binding and cofactor function, but does not affect binding to ssDNA (By similarity).</text>
</comment>
<comment type="similarity">
    <text evidence="5">Belongs to the transcriptional coactivator PC4 family.</text>
</comment>
<evidence type="ECO:0000250" key="1"/>
<evidence type="ECO:0000250" key="2">
    <source>
        <dbReference type="UniProtKB" id="P11031"/>
    </source>
</evidence>
<evidence type="ECO:0000250" key="3">
    <source>
        <dbReference type="UniProtKB" id="P53999"/>
    </source>
</evidence>
<evidence type="ECO:0000256" key="4">
    <source>
        <dbReference type="SAM" id="MobiDB-lite"/>
    </source>
</evidence>
<evidence type="ECO:0000305" key="5"/>
<name>TCP4_MACFA</name>
<dbReference type="EMBL" id="AB168249">
    <property type="protein sequence ID" value="BAE00374.1"/>
    <property type="molecule type" value="mRNA"/>
</dbReference>
<dbReference type="RefSeq" id="NP_001272042.1">
    <property type="nucleotide sequence ID" value="NM_001285113.1"/>
</dbReference>
<dbReference type="RefSeq" id="XP_015306641.1">
    <property type="nucleotide sequence ID" value="XM_015451155.1"/>
</dbReference>
<dbReference type="RefSeq" id="XP_015306642.1">
    <property type="nucleotide sequence ID" value="XM_015451156.1"/>
</dbReference>
<dbReference type="RefSeq" id="XP_045249513.1">
    <property type="nucleotide sequence ID" value="XM_045393578.2"/>
</dbReference>
<dbReference type="BMRB" id="Q4R947"/>
<dbReference type="SMR" id="Q4R947"/>
<dbReference type="STRING" id="9541.ENSMFAP00000001460"/>
<dbReference type="Ensembl" id="ENSMFAT00000078022.1">
    <property type="protein sequence ID" value="ENSMFAP00000049298.1"/>
    <property type="gene ID" value="ENSMFAG00000062564.1"/>
</dbReference>
<dbReference type="GeneID" id="101926874"/>
<dbReference type="VEuPathDB" id="HostDB:ENSMFAG00000040728"/>
<dbReference type="eggNOG" id="KOG2712">
    <property type="taxonomic scope" value="Eukaryota"/>
</dbReference>
<dbReference type="GeneTree" id="ENSGT00390000008802"/>
<dbReference type="OMA" id="VTINEFR"/>
<dbReference type="Proteomes" id="UP000233100">
    <property type="component" value="Chromosome 6"/>
</dbReference>
<dbReference type="GO" id="GO:0005634">
    <property type="term" value="C:nucleus"/>
    <property type="evidence" value="ECO:0007669"/>
    <property type="project" value="UniProtKB-SubCell"/>
</dbReference>
<dbReference type="GO" id="GO:0003677">
    <property type="term" value="F:DNA binding"/>
    <property type="evidence" value="ECO:0007669"/>
    <property type="project" value="UniProtKB-KW"/>
</dbReference>
<dbReference type="GO" id="GO:0003713">
    <property type="term" value="F:transcription coactivator activity"/>
    <property type="evidence" value="ECO:0007669"/>
    <property type="project" value="InterPro"/>
</dbReference>
<dbReference type="GO" id="GO:0060261">
    <property type="term" value="P:positive regulation of transcription initiation by RNA polymerase II"/>
    <property type="evidence" value="ECO:0007669"/>
    <property type="project" value="InterPro"/>
</dbReference>
<dbReference type="FunFam" id="2.30.31.10:FF:000001">
    <property type="entry name" value="Activated RNA polymerase II transcriptional coactivator p15"/>
    <property type="match status" value="1"/>
</dbReference>
<dbReference type="Gene3D" id="2.30.31.10">
    <property type="entry name" value="Transcriptional Coactivator Pc4, Chain A"/>
    <property type="match status" value="1"/>
</dbReference>
<dbReference type="InterPro" id="IPR003173">
    <property type="entry name" value="PC4_C"/>
</dbReference>
<dbReference type="InterPro" id="IPR009044">
    <property type="entry name" value="ssDNA-bd_transcriptional_reg"/>
</dbReference>
<dbReference type="InterPro" id="IPR045125">
    <property type="entry name" value="Sub1/Tcp4-like"/>
</dbReference>
<dbReference type="PANTHER" id="PTHR13215">
    <property type="entry name" value="RNA POLYMERASE II TRANSCRIPTIONAL COACTIVATOR"/>
    <property type="match status" value="1"/>
</dbReference>
<dbReference type="Pfam" id="PF02229">
    <property type="entry name" value="PC4"/>
    <property type="match status" value="1"/>
</dbReference>
<dbReference type="SUPFAM" id="SSF54447">
    <property type="entry name" value="ssDNA-binding transcriptional regulator domain"/>
    <property type="match status" value="1"/>
</dbReference>
<organism>
    <name type="scientific">Macaca fascicularis</name>
    <name type="common">Crab-eating macaque</name>
    <name type="synonym">Cynomolgus monkey</name>
    <dbReference type="NCBI Taxonomy" id="9541"/>
    <lineage>
        <taxon>Eukaryota</taxon>
        <taxon>Metazoa</taxon>
        <taxon>Chordata</taxon>
        <taxon>Craniata</taxon>
        <taxon>Vertebrata</taxon>
        <taxon>Euteleostomi</taxon>
        <taxon>Mammalia</taxon>
        <taxon>Eutheria</taxon>
        <taxon>Euarchontoglires</taxon>
        <taxon>Primates</taxon>
        <taxon>Haplorrhini</taxon>
        <taxon>Catarrhini</taxon>
        <taxon>Cercopithecidae</taxon>
        <taxon>Cercopithecinae</taxon>
        <taxon>Macaca</taxon>
    </lineage>
</organism>
<keyword id="KW-0007">Acetylation</keyword>
<keyword id="KW-0010">Activator</keyword>
<keyword id="KW-0238">DNA-binding</keyword>
<keyword id="KW-1017">Isopeptide bond</keyword>
<keyword id="KW-0539">Nucleus</keyword>
<keyword id="KW-0597">Phosphoprotein</keyword>
<keyword id="KW-1185">Reference proteome</keyword>
<keyword id="KW-0804">Transcription</keyword>
<keyword id="KW-0805">Transcription regulation</keyword>
<keyword id="KW-0832">Ubl conjugation</keyword>
<protein>
    <recommendedName>
        <fullName>Activated RNA polymerase II transcriptional coactivator p15</fullName>
    </recommendedName>
    <alternativeName>
        <fullName>SUB1 homolog</fullName>
    </alternativeName>
</protein>